<name>YQGF_LIMRD</name>
<feature type="chain" id="PRO_1000061532" description="Putative pre-16S rRNA nuclease">
    <location>
        <begin position="1"/>
        <end position="147"/>
    </location>
</feature>
<dbReference type="EC" id="3.1.-.-" evidence="1"/>
<dbReference type="EMBL" id="CP000705">
    <property type="protein sequence ID" value="ABQ82803.1"/>
    <property type="molecule type" value="Genomic_DNA"/>
</dbReference>
<dbReference type="SMR" id="A5VIX9"/>
<dbReference type="STRING" id="557436.Lreu_0535"/>
<dbReference type="KEGG" id="lre:Lreu_0535"/>
<dbReference type="eggNOG" id="COG0816">
    <property type="taxonomic scope" value="Bacteria"/>
</dbReference>
<dbReference type="HOGENOM" id="CLU_098240_2_0_9"/>
<dbReference type="Proteomes" id="UP000001991">
    <property type="component" value="Chromosome"/>
</dbReference>
<dbReference type="GO" id="GO:0005829">
    <property type="term" value="C:cytosol"/>
    <property type="evidence" value="ECO:0007669"/>
    <property type="project" value="TreeGrafter"/>
</dbReference>
<dbReference type="GO" id="GO:0004518">
    <property type="term" value="F:nuclease activity"/>
    <property type="evidence" value="ECO:0007669"/>
    <property type="project" value="UniProtKB-KW"/>
</dbReference>
<dbReference type="GO" id="GO:0000967">
    <property type="term" value="P:rRNA 5'-end processing"/>
    <property type="evidence" value="ECO:0007669"/>
    <property type="project" value="UniProtKB-UniRule"/>
</dbReference>
<dbReference type="CDD" id="cd16964">
    <property type="entry name" value="YqgF"/>
    <property type="match status" value="1"/>
</dbReference>
<dbReference type="Gene3D" id="3.30.420.140">
    <property type="entry name" value="YqgF/RNase H-like domain"/>
    <property type="match status" value="1"/>
</dbReference>
<dbReference type="HAMAP" id="MF_00651">
    <property type="entry name" value="Nuclease_YqgF"/>
    <property type="match status" value="1"/>
</dbReference>
<dbReference type="InterPro" id="IPR012337">
    <property type="entry name" value="RNaseH-like_sf"/>
</dbReference>
<dbReference type="InterPro" id="IPR005227">
    <property type="entry name" value="YqgF"/>
</dbReference>
<dbReference type="InterPro" id="IPR006641">
    <property type="entry name" value="YqgF/RNaseH-like_dom"/>
</dbReference>
<dbReference type="InterPro" id="IPR037027">
    <property type="entry name" value="YqgF/RNaseH-like_dom_sf"/>
</dbReference>
<dbReference type="NCBIfam" id="TIGR00250">
    <property type="entry name" value="RNAse_H_YqgF"/>
    <property type="match status" value="1"/>
</dbReference>
<dbReference type="PANTHER" id="PTHR33317">
    <property type="entry name" value="POLYNUCLEOTIDYL TRANSFERASE, RIBONUCLEASE H-LIKE SUPERFAMILY PROTEIN"/>
    <property type="match status" value="1"/>
</dbReference>
<dbReference type="PANTHER" id="PTHR33317:SF4">
    <property type="entry name" value="POLYNUCLEOTIDYL TRANSFERASE, RIBONUCLEASE H-LIKE SUPERFAMILY PROTEIN"/>
    <property type="match status" value="1"/>
</dbReference>
<dbReference type="Pfam" id="PF03652">
    <property type="entry name" value="RuvX"/>
    <property type="match status" value="1"/>
</dbReference>
<dbReference type="SMART" id="SM00732">
    <property type="entry name" value="YqgFc"/>
    <property type="match status" value="1"/>
</dbReference>
<dbReference type="SUPFAM" id="SSF53098">
    <property type="entry name" value="Ribonuclease H-like"/>
    <property type="match status" value="1"/>
</dbReference>
<gene>
    <name type="ordered locus">Lreu_0535</name>
</gene>
<protein>
    <recommendedName>
        <fullName evidence="1">Putative pre-16S rRNA nuclease</fullName>
        <ecNumber evidence="1">3.1.-.-</ecNumber>
    </recommendedName>
</protein>
<keyword id="KW-0963">Cytoplasm</keyword>
<keyword id="KW-0378">Hydrolase</keyword>
<keyword id="KW-0540">Nuclease</keyword>
<keyword id="KW-1185">Reference proteome</keyword>
<keyword id="KW-0690">Ribosome biogenesis</keyword>
<proteinExistence type="inferred from homology"/>
<sequence length="147" mass="16525">MRLMGLDVGSKTVGISVSDPLGWTAQAVEIIPIDEENEIFGIDRVAELVKKEQVAGFVIGLPKNMNNTEGPRVEASQHYGKLLQQRFPDIPIDFQDERLTTVEAHRMLVEEADISRAKQKKVIDEVAATFILQSYLDRHGRLVNKLK</sequence>
<accession>A5VIX9</accession>
<comment type="function">
    <text evidence="1">Could be a nuclease involved in processing of the 5'-end of pre-16S rRNA.</text>
</comment>
<comment type="subcellular location">
    <subcellularLocation>
        <location evidence="1">Cytoplasm</location>
    </subcellularLocation>
</comment>
<comment type="similarity">
    <text evidence="1">Belongs to the YqgF nuclease family.</text>
</comment>
<evidence type="ECO:0000255" key="1">
    <source>
        <dbReference type="HAMAP-Rule" id="MF_00651"/>
    </source>
</evidence>
<reference key="1">
    <citation type="journal article" date="2011" name="PLoS Genet.">
        <title>The evolution of host specialization in the vertebrate gut symbiont Lactobacillus reuteri.</title>
        <authorList>
            <person name="Frese S.A."/>
            <person name="Benson A.K."/>
            <person name="Tannock G.W."/>
            <person name="Loach D.M."/>
            <person name="Kim J."/>
            <person name="Zhang M."/>
            <person name="Oh P.L."/>
            <person name="Heng N.C."/>
            <person name="Patil P.B."/>
            <person name="Juge N."/>
            <person name="Mackenzie D.A."/>
            <person name="Pearson B.M."/>
            <person name="Lapidus A."/>
            <person name="Dalin E."/>
            <person name="Tice H."/>
            <person name="Goltsman E."/>
            <person name="Land M."/>
            <person name="Hauser L."/>
            <person name="Ivanova N."/>
            <person name="Kyrpides N.C."/>
            <person name="Walter J."/>
        </authorList>
    </citation>
    <scope>NUCLEOTIDE SEQUENCE [LARGE SCALE GENOMIC DNA]</scope>
    <source>
        <strain>DSM 20016</strain>
    </source>
</reference>
<organism>
    <name type="scientific">Limosilactobacillus reuteri (strain DSM 20016)</name>
    <name type="common">Lactobacillus reuteri</name>
    <dbReference type="NCBI Taxonomy" id="557436"/>
    <lineage>
        <taxon>Bacteria</taxon>
        <taxon>Bacillati</taxon>
        <taxon>Bacillota</taxon>
        <taxon>Bacilli</taxon>
        <taxon>Lactobacillales</taxon>
        <taxon>Lactobacillaceae</taxon>
        <taxon>Limosilactobacillus</taxon>
    </lineage>
</organism>